<organism>
    <name type="scientific">Prochlorococcus marinus (strain SARG / CCMP1375 / SS120)</name>
    <dbReference type="NCBI Taxonomy" id="167539"/>
    <lineage>
        <taxon>Bacteria</taxon>
        <taxon>Bacillati</taxon>
        <taxon>Cyanobacteriota</taxon>
        <taxon>Cyanophyceae</taxon>
        <taxon>Synechococcales</taxon>
        <taxon>Prochlorococcaceae</taxon>
        <taxon>Prochlorococcus</taxon>
    </lineage>
</organism>
<name>RS13_PROMA</name>
<reference key="1">
    <citation type="journal article" date="2003" name="Proc. Natl. Acad. Sci. U.S.A.">
        <title>Genome sequence of the cyanobacterium Prochlorococcus marinus SS120, a nearly minimal oxyphototrophic genome.</title>
        <authorList>
            <person name="Dufresne A."/>
            <person name="Salanoubat M."/>
            <person name="Partensky F."/>
            <person name="Artiguenave F."/>
            <person name="Axmann I.M."/>
            <person name="Barbe V."/>
            <person name="Duprat S."/>
            <person name="Galperin M.Y."/>
            <person name="Koonin E.V."/>
            <person name="Le Gall F."/>
            <person name="Makarova K.S."/>
            <person name="Ostrowski M."/>
            <person name="Oztas S."/>
            <person name="Robert C."/>
            <person name="Rogozin I.B."/>
            <person name="Scanlan D.J."/>
            <person name="Tandeau de Marsac N."/>
            <person name="Weissenbach J."/>
            <person name="Wincker P."/>
            <person name="Wolf Y.I."/>
            <person name="Hess W.R."/>
        </authorList>
    </citation>
    <scope>NUCLEOTIDE SEQUENCE [LARGE SCALE GENOMIC DNA]</scope>
    <source>
        <strain>SARG / CCMP1375 / SS120</strain>
    </source>
</reference>
<keyword id="KW-1185">Reference proteome</keyword>
<keyword id="KW-0687">Ribonucleoprotein</keyword>
<keyword id="KW-0689">Ribosomal protein</keyword>
<keyword id="KW-0694">RNA-binding</keyword>
<keyword id="KW-0699">rRNA-binding</keyword>
<keyword id="KW-0820">tRNA-binding</keyword>
<evidence type="ECO:0000255" key="1">
    <source>
        <dbReference type="HAMAP-Rule" id="MF_01315"/>
    </source>
</evidence>
<evidence type="ECO:0000256" key="2">
    <source>
        <dbReference type="SAM" id="MobiDB-lite"/>
    </source>
</evidence>
<evidence type="ECO:0000305" key="3"/>
<comment type="function">
    <text evidence="1">Located at the top of the head of the 30S subunit, it contacts several helices of the 16S rRNA. In the 70S ribosome it contacts the 23S rRNA (bridge B1a) and protein L5 of the 50S subunit (bridge B1b), connecting the 2 subunits; these bridges are implicated in subunit movement. Contacts the tRNAs in the A and P-sites.</text>
</comment>
<comment type="subunit">
    <text evidence="1">Part of the 30S ribosomal subunit. Forms a loose heterodimer with protein S19. Forms two bridges to the 50S subunit in the 70S ribosome.</text>
</comment>
<comment type="similarity">
    <text evidence="1">Belongs to the universal ribosomal protein uS13 family.</text>
</comment>
<proteinExistence type="inferred from homology"/>
<protein>
    <recommendedName>
        <fullName evidence="1">Small ribosomal subunit protein uS13</fullName>
    </recommendedName>
    <alternativeName>
        <fullName evidence="3">30S ribosomal protein S13</fullName>
    </alternativeName>
</protein>
<sequence length="121" mass="13696">MARIAGIDLPRDKRVEIALTYIYGIGLTRAQNILAKTGVNPDIRVKDLEDGDVQKLRAATESFTIEGDLRRQEGMALKRLQDIGCLRGRRHRMSLPVRGQRTRTNARTRRGSRKTVAGRKK</sequence>
<dbReference type="EMBL" id="AE017126">
    <property type="protein sequence ID" value="AAQ00735.1"/>
    <property type="molecule type" value="Genomic_DNA"/>
</dbReference>
<dbReference type="RefSeq" id="NP_876082.1">
    <property type="nucleotide sequence ID" value="NC_005042.1"/>
</dbReference>
<dbReference type="RefSeq" id="WP_011125840.1">
    <property type="nucleotide sequence ID" value="NC_005042.1"/>
</dbReference>
<dbReference type="SMR" id="Q7V9Y3"/>
<dbReference type="STRING" id="167539.Pro_1691"/>
<dbReference type="EnsemblBacteria" id="AAQ00735">
    <property type="protein sequence ID" value="AAQ00735"/>
    <property type="gene ID" value="Pro_1691"/>
</dbReference>
<dbReference type="KEGG" id="pma:Pro_1691"/>
<dbReference type="PATRIC" id="fig|167539.5.peg.1786"/>
<dbReference type="eggNOG" id="COG0099">
    <property type="taxonomic scope" value="Bacteria"/>
</dbReference>
<dbReference type="HOGENOM" id="CLU_103849_1_2_3"/>
<dbReference type="OrthoDB" id="9803610at2"/>
<dbReference type="Proteomes" id="UP000001420">
    <property type="component" value="Chromosome"/>
</dbReference>
<dbReference type="GO" id="GO:0005829">
    <property type="term" value="C:cytosol"/>
    <property type="evidence" value="ECO:0007669"/>
    <property type="project" value="TreeGrafter"/>
</dbReference>
<dbReference type="GO" id="GO:0015935">
    <property type="term" value="C:small ribosomal subunit"/>
    <property type="evidence" value="ECO:0007669"/>
    <property type="project" value="TreeGrafter"/>
</dbReference>
<dbReference type="GO" id="GO:0019843">
    <property type="term" value="F:rRNA binding"/>
    <property type="evidence" value="ECO:0007669"/>
    <property type="project" value="UniProtKB-UniRule"/>
</dbReference>
<dbReference type="GO" id="GO:0003735">
    <property type="term" value="F:structural constituent of ribosome"/>
    <property type="evidence" value="ECO:0007669"/>
    <property type="project" value="InterPro"/>
</dbReference>
<dbReference type="GO" id="GO:0000049">
    <property type="term" value="F:tRNA binding"/>
    <property type="evidence" value="ECO:0007669"/>
    <property type="project" value="UniProtKB-UniRule"/>
</dbReference>
<dbReference type="GO" id="GO:0006412">
    <property type="term" value="P:translation"/>
    <property type="evidence" value="ECO:0007669"/>
    <property type="project" value="UniProtKB-UniRule"/>
</dbReference>
<dbReference type="FunFam" id="1.10.8.50:FF:000001">
    <property type="entry name" value="30S ribosomal protein S13"/>
    <property type="match status" value="1"/>
</dbReference>
<dbReference type="Gene3D" id="1.10.8.50">
    <property type="match status" value="1"/>
</dbReference>
<dbReference type="Gene3D" id="4.10.910.10">
    <property type="entry name" value="30s ribosomal protein s13, domain 2"/>
    <property type="match status" value="1"/>
</dbReference>
<dbReference type="HAMAP" id="MF_01315">
    <property type="entry name" value="Ribosomal_uS13"/>
    <property type="match status" value="1"/>
</dbReference>
<dbReference type="InterPro" id="IPR027437">
    <property type="entry name" value="Rbsml_uS13_C"/>
</dbReference>
<dbReference type="InterPro" id="IPR001892">
    <property type="entry name" value="Ribosomal_uS13"/>
</dbReference>
<dbReference type="InterPro" id="IPR010979">
    <property type="entry name" value="Ribosomal_uS13-like_H2TH"/>
</dbReference>
<dbReference type="InterPro" id="IPR019980">
    <property type="entry name" value="Ribosomal_uS13_bac-type"/>
</dbReference>
<dbReference type="InterPro" id="IPR018269">
    <property type="entry name" value="Ribosomal_uS13_CS"/>
</dbReference>
<dbReference type="NCBIfam" id="TIGR03631">
    <property type="entry name" value="uS13_bact"/>
    <property type="match status" value="1"/>
</dbReference>
<dbReference type="PANTHER" id="PTHR10871">
    <property type="entry name" value="30S RIBOSOMAL PROTEIN S13/40S RIBOSOMAL PROTEIN S18"/>
    <property type="match status" value="1"/>
</dbReference>
<dbReference type="PANTHER" id="PTHR10871:SF1">
    <property type="entry name" value="SMALL RIBOSOMAL SUBUNIT PROTEIN US13M"/>
    <property type="match status" value="1"/>
</dbReference>
<dbReference type="Pfam" id="PF00416">
    <property type="entry name" value="Ribosomal_S13"/>
    <property type="match status" value="1"/>
</dbReference>
<dbReference type="PIRSF" id="PIRSF002134">
    <property type="entry name" value="Ribosomal_S13"/>
    <property type="match status" value="1"/>
</dbReference>
<dbReference type="SUPFAM" id="SSF46946">
    <property type="entry name" value="S13-like H2TH domain"/>
    <property type="match status" value="1"/>
</dbReference>
<dbReference type="PROSITE" id="PS00646">
    <property type="entry name" value="RIBOSOMAL_S13_1"/>
    <property type="match status" value="1"/>
</dbReference>
<dbReference type="PROSITE" id="PS50159">
    <property type="entry name" value="RIBOSOMAL_S13_2"/>
    <property type="match status" value="1"/>
</dbReference>
<feature type="chain" id="PRO_0000230544" description="Small ribosomal subunit protein uS13">
    <location>
        <begin position="1"/>
        <end position="121"/>
    </location>
</feature>
<feature type="region of interest" description="Disordered" evidence="2">
    <location>
        <begin position="91"/>
        <end position="121"/>
    </location>
</feature>
<feature type="compositionally biased region" description="Basic residues" evidence="2">
    <location>
        <begin position="100"/>
        <end position="121"/>
    </location>
</feature>
<gene>
    <name evidence="1" type="primary">rpsM</name>
    <name evidence="1" type="synonym">rps13</name>
    <name type="ordered locus">Pro_1691</name>
</gene>
<accession>Q7V9Y3</accession>